<sequence>MKKKNWIYALIVTLIIIIAIVSMIFFVQTKYGDQSEKGSQSVSNKNNKIHIAIVNEDQPTTYNGKKVELGQAFIKRLANEKNYKFETVTRNVAESGLKNGGYQVMIVIPENFSKLAMQLDAKTPSKISLQYKTAVGQKEEVAKNTEKVVSNVLNDFNKNLVEIYLTSIIDNLHNAQKNVGAIMTREHGVNSKFSNYLLNPINDFPELFTDTLVNSISANKDITKWFQTYNKSLLSANSDTFRVNTDYNVSTLIEKQNSLFDEHNTAMDKMLQDYKSQKDSVELDNYINALKQMDSQIDQQSSMQDTGKEEYKQTVKENLDKLREIIQSQESPFSKGMIEDYRKQLTESLQDELANNKDLQDALNSIKMNNAQFAENLEKQLHDDIVKEPDTDTTFIYNMSKQDFIAAGLNEGEANKYEAIVKEAKRYKNEYNLKKPLAEHINLTDYDNQVAQDTSSLINDGVKVQRTETIKSNDINQLTVATDPHFNFEGDIKINGKKYDIKDQSVQLDTSNKEYKVEVNGVAKLKKDAEKDFLKDKTMHLQLLFGQANRQDEPNDKKATSVVDVTLNHNLDGRLSKDALSQQLSALSRFDAHYKMYTDTKGREDKPFDNKRLIDMMVDQVINDMESFKDDKVAVLHQIDSMEENSDKLIDDILNNKKNTTKNKEDISKLIDQLENVKKTFAEEPQEPKIDKGKNDEFNTMSSNLDKEISRISEKSTQLLSDTQESKSIADSVSGQLNQVDNNVNKLHATGRALGVRANDLNRQMAKNDKDNELFAKEFKKVLQNSKDGDRQNQALKAFMSNPVQKKNLENVLANNGNTDVISPTLFVLLMYLLSMITAYIFYSYERAKGQMNFIKDDYSSKNHLWNNVITSGVIGTTGLVEGLIVGLIAMNKFHVLAGYRAKFILMVILTMMVFVLINTYLLRQVKSIGMFLMIAALGLYFVAMNNLKAAGQGVTNKISPLSYIDNMFFNYLNAEHPIGLVLVILTVLVIIGFVLNMFIKHFKKERLI</sequence>
<gene>
    <name evidence="6" type="primary">esaA</name>
    <name type="ordered locus">NWMN_0220</name>
</gene>
<name>ESAA_STAAE</name>
<evidence type="ECO:0000250" key="1">
    <source>
        <dbReference type="UniProtKB" id="A0A0H2XFP1"/>
    </source>
</evidence>
<evidence type="ECO:0000250" key="2">
    <source>
        <dbReference type="UniProtKB" id="Q2G188"/>
    </source>
</evidence>
<evidence type="ECO:0000255" key="3"/>
<evidence type="ECO:0000256" key="4">
    <source>
        <dbReference type="SAM" id="MobiDB-lite"/>
    </source>
</evidence>
<evidence type="ECO:0000269" key="5">
    <source>
    </source>
</evidence>
<evidence type="ECO:0000303" key="6">
    <source>
    </source>
</evidence>
<evidence type="ECO:0000305" key="7"/>
<protein>
    <recommendedName>
        <fullName evidence="7">Type VII secretion system accessory factor EsaA</fullName>
    </recommendedName>
</protein>
<accession>P0C049</accession>
<accession>A6QDR0</accession>
<comment type="function">
    <text evidence="5">Component of the type VII secretion system (Ess). Provides together with EssB and other components such as EssC and EssE a secretion platform across the cytoplasmic membrane in the host.</text>
</comment>
<comment type="subunit">
    <text evidence="1 2">Homodimer (By similarity). Interacts with EssB (By similarity).</text>
</comment>
<comment type="interaction">
    <interactant intactId="EBI-11666573">
        <id>P0C049</id>
    </interactant>
    <interactant intactId="EBI-11666573">
        <id>P0C049</id>
        <label>esaA</label>
    </interactant>
    <organismsDiffer>false</organismsDiffer>
    <experiments>2</experiments>
</comment>
<comment type="subcellular location">
    <subcellularLocation>
        <location evidence="2">Cell membrane</location>
        <topology evidence="3">Multi-pass membrane protein</topology>
    </subcellularLocation>
</comment>
<comment type="similarity">
    <text evidence="7">Belongs to the EsaA family.</text>
</comment>
<organism>
    <name type="scientific">Staphylococcus aureus (strain Newman)</name>
    <dbReference type="NCBI Taxonomy" id="426430"/>
    <lineage>
        <taxon>Bacteria</taxon>
        <taxon>Bacillati</taxon>
        <taxon>Bacillota</taxon>
        <taxon>Bacilli</taxon>
        <taxon>Bacillales</taxon>
        <taxon>Staphylococcaceae</taxon>
        <taxon>Staphylococcus</taxon>
    </lineage>
</organism>
<proteinExistence type="evidence at protein level"/>
<dbReference type="EMBL" id="AP009351">
    <property type="protein sequence ID" value="BAF66492.1"/>
    <property type="molecule type" value="Genomic_DNA"/>
</dbReference>
<dbReference type="RefSeq" id="WP_000728955.1">
    <property type="nucleotide sequence ID" value="NZ_JBBIAE010000003.1"/>
</dbReference>
<dbReference type="SMR" id="P0C049"/>
<dbReference type="MINT" id="P0C049"/>
<dbReference type="KEGG" id="sae:NWMN_0220"/>
<dbReference type="HOGENOM" id="CLU_015018_0_0_9"/>
<dbReference type="Proteomes" id="UP000006386">
    <property type="component" value="Chromosome"/>
</dbReference>
<dbReference type="GO" id="GO:0005886">
    <property type="term" value="C:plasma membrane"/>
    <property type="evidence" value="ECO:0007669"/>
    <property type="project" value="UniProtKB-SubCell"/>
</dbReference>
<dbReference type="GO" id="GO:0042802">
    <property type="term" value="F:identical protein binding"/>
    <property type="evidence" value="ECO:0000353"/>
    <property type="project" value="IntAct"/>
</dbReference>
<dbReference type="Gene3D" id="3.40.1710.10">
    <property type="entry name" value="abc type-2 transporter like domain"/>
    <property type="match status" value="1"/>
</dbReference>
<dbReference type="InterPro" id="IPR051328">
    <property type="entry name" value="T7SS_ABC-Transporter"/>
</dbReference>
<dbReference type="InterPro" id="IPR023838">
    <property type="entry name" value="T7SS_EsaA"/>
</dbReference>
<dbReference type="NCBIfam" id="TIGR03929">
    <property type="entry name" value="T7_esaA_Nterm"/>
    <property type="match status" value="1"/>
</dbReference>
<dbReference type="PANTHER" id="PTHR43077:SF10">
    <property type="entry name" value="TRANSPORT PERMEASE PROTEIN"/>
    <property type="match status" value="1"/>
</dbReference>
<dbReference type="PANTHER" id="PTHR43077">
    <property type="entry name" value="TRANSPORT PERMEASE YVFS-RELATED"/>
    <property type="match status" value="1"/>
</dbReference>
<keyword id="KW-1003">Cell membrane</keyword>
<keyword id="KW-0472">Membrane</keyword>
<keyword id="KW-0812">Transmembrane</keyword>
<keyword id="KW-1133">Transmembrane helix</keyword>
<keyword id="KW-0843">Virulence</keyword>
<feature type="chain" id="PRO_0000087041" description="Type VII secretion system accessory factor EsaA">
    <location>
        <begin position="1"/>
        <end position="1009"/>
    </location>
</feature>
<feature type="transmembrane region" description="Helical" evidence="3">
    <location>
        <begin position="7"/>
        <end position="27"/>
    </location>
</feature>
<feature type="transmembrane region" description="Helical" evidence="3">
    <location>
        <begin position="822"/>
        <end position="842"/>
    </location>
</feature>
<feature type="transmembrane region" description="Helical" evidence="3">
    <location>
        <begin position="869"/>
        <end position="889"/>
    </location>
</feature>
<feature type="transmembrane region" description="Helical" evidence="3">
    <location>
        <begin position="903"/>
        <end position="923"/>
    </location>
</feature>
<feature type="transmembrane region" description="Helical" evidence="3">
    <location>
        <begin position="928"/>
        <end position="948"/>
    </location>
</feature>
<feature type="transmembrane region" description="Helical" evidence="3">
    <location>
        <begin position="979"/>
        <end position="999"/>
    </location>
</feature>
<feature type="region of interest" description="Disordered" evidence="4">
    <location>
        <begin position="680"/>
        <end position="707"/>
    </location>
</feature>
<feature type="compositionally biased region" description="Basic and acidic residues" evidence="4">
    <location>
        <begin position="680"/>
        <end position="697"/>
    </location>
</feature>
<reference key="1">
    <citation type="journal article" date="2008" name="J. Bacteriol.">
        <title>Genome sequence of Staphylococcus aureus strain Newman and comparative analysis of staphylococcal genomes: polymorphism and evolution of two major pathogenicity islands.</title>
        <authorList>
            <person name="Baba T."/>
            <person name="Bae T."/>
            <person name="Schneewind O."/>
            <person name="Takeuchi F."/>
            <person name="Hiramatsu K."/>
        </authorList>
    </citation>
    <scope>NUCLEOTIDE SEQUENCE [LARGE SCALE GENOMIC DNA]</scope>
    <source>
        <strain>Newman</strain>
    </source>
</reference>
<reference key="2">
    <citation type="journal article" date="2005" name="Proc. Natl. Acad. Sci. U.S.A.">
        <title>EsxA and EsxB are secreted by an ESAT-6-like system that is required for the pathogenesis of Staphylococcus aureus infections.</title>
        <authorList>
            <person name="Burts M.L."/>
            <person name="Williams W.A."/>
            <person name="DeBord K."/>
            <person name="Missiakas D.M."/>
        </authorList>
    </citation>
    <scope>FUNCTION</scope>
    <source>
        <strain>Newman</strain>
    </source>
</reference>